<organism>
    <name type="scientific">Neisseria meningitidis serogroup C / serotype 2a (strain ATCC 700532 / DSM 15464 / FAM18)</name>
    <dbReference type="NCBI Taxonomy" id="272831"/>
    <lineage>
        <taxon>Bacteria</taxon>
        <taxon>Pseudomonadati</taxon>
        <taxon>Pseudomonadota</taxon>
        <taxon>Betaproteobacteria</taxon>
        <taxon>Neisseriales</taxon>
        <taxon>Neisseriaceae</taxon>
        <taxon>Neisseria</taxon>
    </lineage>
</organism>
<proteinExistence type="inferred from homology"/>
<sequence>MSRVAKNPVTVPAGVEVKFGTEALVIKGKNGELSFPLHSDVAIEFNDGKLAFVANNSSKQANAMSGTARALVSNMVKGVSEGFEKRLQLIGVGYRAQAQGKILNLSLGFSHPIVYEMPEGVSVQTPSQTEIVLTGSDKQVVGQVAAEIRAFRAPEPYKGKGVRYVGEVVVMKEAKKK</sequence>
<protein>
    <recommendedName>
        <fullName evidence="1">Large ribosomal subunit protein uL6</fullName>
    </recommendedName>
    <alternativeName>
        <fullName evidence="2">50S ribosomal protein L6</fullName>
    </alternativeName>
</protein>
<comment type="function">
    <text evidence="1">This protein binds to the 23S rRNA, and is important in its secondary structure. It is located near the subunit interface in the base of the L7/L12 stalk, and near the tRNA binding site of the peptidyltransferase center.</text>
</comment>
<comment type="subunit">
    <text evidence="1">Part of the 50S ribosomal subunit.</text>
</comment>
<comment type="similarity">
    <text evidence="1">Belongs to the universal ribosomal protein uL6 family.</text>
</comment>
<gene>
    <name evidence="1" type="primary">rplF</name>
    <name type="ordered locus">NMC0147</name>
</gene>
<feature type="chain" id="PRO_1000055273" description="Large ribosomal subunit protein uL6">
    <location>
        <begin position="1"/>
        <end position="177"/>
    </location>
</feature>
<evidence type="ECO:0000255" key="1">
    <source>
        <dbReference type="HAMAP-Rule" id="MF_01365"/>
    </source>
</evidence>
<evidence type="ECO:0000305" key="2"/>
<accession>A1KRI8</accession>
<dbReference type="EMBL" id="AM421808">
    <property type="protein sequence ID" value="CAM09466.1"/>
    <property type="molecule type" value="Genomic_DNA"/>
</dbReference>
<dbReference type="RefSeq" id="WP_002225947.1">
    <property type="nucleotide sequence ID" value="NC_008767.1"/>
</dbReference>
<dbReference type="SMR" id="A1KRI8"/>
<dbReference type="KEGG" id="nmc:NMC0147"/>
<dbReference type="HOGENOM" id="CLU_065464_1_2_4"/>
<dbReference type="Proteomes" id="UP000002286">
    <property type="component" value="Chromosome"/>
</dbReference>
<dbReference type="GO" id="GO:0022625">
    <property type="term" value="C:cytosolic large ribosomal subunit"/>
    <property type="evidence" value="ECO:0007669"/>
    <property type="project" value="TreeGrafter"/>
</dbReference>
<dbReference type="GO" id="GO:0019843">
    <property type="term" value="F:rRNA binding"/>
    <property type="evidence" value="ECO:0007669"/>
    <property type="project" value="UniProtKB-UniRule"/>
</dbReference>
<dbReference type="GO" id="GO:0003735">
    <property type="term" value="F:structural constituent of ribosome"/>
    <property type="evidence" value="ECO:0007669"/>
    <property type="project" value="InterPro"/>
</dbReference>
<dbReference type="GO" id="GO:0002181">
    <property type="term" value="P:cytoplasmic translation"/>
    <property type="evidence" value="ECO:0007669"/>
    <property type="project" value="TreeGrafter"/>
</dbReference>
<dbReference type="FunFam" id="3.90.930.12:FF:000001">
    <property type="entry name" value="50S ribosomal protein L6"/>
    <property type="match status" value="1"/>
</dbReference>
<dbReference type="FunFam" id="3.90.930.12:FF:000002">
    <property type="entry name" value="50S ribosomal protein L6"/>
    <property type="match status" value="1"/>
</dbReference>
<dbReference type="Gene3D" id="3.90.930.12">
    <property type="entry name" value="Ribosomal protein L6, alpha-beta domain"/>
    <property type="match status" value="2"/>
</dbReference>
<dbReference type="HAMAP" id="MF_01365_B">
    <property type="entry name" value="Ribosomal_uL6_B"/>
    <property type="match status" value="1"/>
</dbReference>
<dbReference type="InterPro" id="IPR000702">
    <property type="entry name" value="Ribosomal_uL6-like"/>
</dbReference>
<dbReference type="InterPro" id="IPR036789">
    <property type="entry name" value="Ribosomal_uL6-like_a/b-dom_sf"/>
</dbReference>
<dbReference type="InterPro" id="IPR020040">
    <property type="entry name" value="Ribosomal_uL6_a/b-dom"/>
</dbReference>
<dbReference type="InterPro" id="IPR019906">
    <property type="entry name" value="Ribosomal_uL6_bac-type"/>
</dbReference>
<dbReference type="InterPro" id="IPR002358">
    <property type="entry name" value="Ribosomal_uL6_CS"/>
</dbReference>
<dbReference type="NCBIfam" id="TIGR03654">
    <property type="entry name" value="L6_bact"/>
    <property type="match status" value="1"/>
</dbReference>
<dbReference type="PANTHER" id="PTHR11655">
    <property type="entry name" value="60S/50S RIBOSOMAL PROTEIN L6/L9"/>
    <property type="match status" value="1"/>
</dbReference>
<dbReference type="PANTHER" id="PTHR11655:SF14">
    <property type="entry name" value="LARGE RIBOSOMAL SUBUNIT PROTEIN UL6M"/>
    <property type="match status" value="1"/>
</dbReference>
<dbReference type="Pfam" id="PF00347">
    <property type="entry name" value="Ribosomal_L6"/>
    <property type="match status" value="2"/>
</dbReference>
<dbReference type="PIRSF" id="PIRSF002162">
    <property type="entry name" value="Ribosomal_L6"/>
    <property type="match status" value="1"/>
</dbReference>
<dbReference type="PRINTS" id="PR00059">
    <property type="entry name" value="RIBOSOMALL6"/>
</dbReference>
<dbReference type="SUPFAM" id="SSF56053">
    <property type="entry name" value="Ribosomal protein L6"/>
    <property type="match status" value="2"/>
</dbReference>
<dbReference type="PROSITE" id="PS00525">
    <property type="entry name" value="RIBOSOMAL_L6_1"/>
    <property type="match status" value="1"/>
</dbReference>
<keyword id="KW-0687">Ribonucleoprotein</keyword>
<keyword id="KW-0689">Ribosomal protein</keyword>
<keyword id="KW-0694">RNA-binding</keyword>
<keyword id="KW-0699">rRNA-binding</keyword>
<reference key="1">
    <citation type="journal article" date="2007" name="PLoS Genet.">
        <title>Meningococcal genetic variation mechanisms viewed through comparative analysis of serogroup C strain FAM18.</title>
        <authorList>
            <person name="Bentley S.D."/>
            <person name="Vernikos G.S."/>
            <person name="Snyder L.A.S."/>
            <person name="Churcher C."/>
            <person name="Arrowsmith C."/>
            <person name="Chillingworth T."/>
            <person name="Cronin A."/>
            <person name="Davis P.H."/>
            <person name="Holroyd N.E."/>
            <person name="Jagels K."/>
            <person name="Maddison M."/>
            <person name="Moule S."/>
            <person name="Rabbinowitsch E."/>
            <person name="Sharp S."/>
            <person name="Unwin L."/>
            <person name="Whitehead S."/>
            <person name="Quail M.A."/>
            <person name="Achtman M."/>
            <person name="Barrell B.G."/>
            <person name="Saunders N.J."/>
            <person name="Parkhill J."/>
        </authorList>
    </citation>
    <scope>NUCLEOTIDE SEQUENCE [LARGE SCALE GENOMIC DNA]</scope>
    <source>
        <strain>ATCC 700532 / DSM 15464 / FAM18</strain>
    </source>
</reference>
<name>RL6_NEIMF</name>